<name>GREM1_XENLA</name>
<sequence length="182" mass="20374">MNCLVYALGSLFLLSGLLLPSSEGKKKVSGSQGAIPPPDKGQPNDSEQGQAQPGDRVRGKGKGQALAAEEVLESSQEALHVTERKYLKRDWCKTQPLKQTIHEDGCNSRTIINRFCYGQCNSFYIPRHIRREEGSFQSCSFCKPKKFTTMVVTLNCPELQPPTKKKRITRVKQCRCISIDLD</sequence>
<organism>
    <name type="scientific">Xenopus laevis</name>
    <name type="common">African clawed frog</name>
    <dbReference type="NCBI Taxonomy" id="8355"/>
    <lineage>
        <taxon>Eukaryota</taxon>
        <taxon>Metazoa</taxon>
        <taxon>Chordata</taxon>
        <taxon>Craniata</taxon>
        <taxon>Vertebrata</taxon>
        <taxon>Euteleostomi</taxon>
        <taxon>Amphibia</taxon>
        <taxon>Batrachia</taxon>
        <taxon>Anura</taxon>
        <taxon>Pipoidea</taxon>
        <taxon>Pipidae</taxon>
        <taxon>Xenopodinae</taxon>
        <taxon>Xenopus</taxon>
        <taxon>Xenopus</taxon>
    </lineage>
</organism>
<accession>O73754</accession>
<dbReference type="EMBL" id="AF045798">
    <property type="protein sequence ID" value="AAC41279.1"/>
    <property type="molecule type" value="mRNA"/>
</dbReference>
<dbReference type="RefSeq" id="NP_001083746.1">
    <property type="nucleotide sequence ID" value="NM_001090277.1"/>
</dbReference>
<dbReference type="SMR" id="O73754"/>
<dbReference type="GlyCosmos" id="O73754">
    <property type="glycosylation" value="1 site, No reported glycans"/>
</dbReference>
<dbReference type="GeneID" id="399094"/>
<dbReference type="KEGG" id="xla:399094"/>
<dbReference type="AGR" id="Xenbase:XB-GENE-865098"/>
<dbReference type="CTD" id="399094"/>
<dbReference type="Xenbase" id="XB-GENE-865098">
    <property type="gene designation" value="grem1.L"/>
</dbReference>
<dbReference type="OMA" id="PPDKDQY"/>
<dbReference type="OrthoDB" id="10061784at2759"/>
<dbReference type="Proteomes" id="UP000186698">
    <property type="component" value="Chromosome 8L"/>
</dbReference>
<dbReference type="Bgee" id="399094">
    <property type="expression patterns" value="Expressed in stomach and 16 other cell types or tissues"/>
</dbReference>
<dbReference type="GO" id="GO:0005615">
    <property type="term" value="C:extracellular space"/>
    <property type="evidence" value="ECO:0000314"/>
    <property type="project" value="BHF-UCL"/>
</dbReference>
<dbReference type="GO" id="GO:0036122">
    <property type="term" value="F:BMP binding"/>
    <property type="evidence" value="ECO:0000314"/>
    <property type="project" value="BHF-UCL"/>
</dbReference>
<dbReference type="GO" id="GO:0005125">
    <property type="term" value="F:cytokine activity"/>
    <property type="evidence" value="ECO:0007669"/>
    <property type="project" value="UniProtKB-KW"/>
</dbReference>
<dbReference type="GO" id="GO:0043395">
    <property type="term" value="F:heparan sulfate proteoglycan binding"/>
    <property type="evidence" value="ECO:0000315"/>
    <property type="project" value="Xenbase"/>
</dbReference>
<dbReference type="GO" id="GO:0016015">
    <property type="term" value="F:morphogen activity"/>
    <property type="evidence" value="ECO:0000314"/>
    <property type="project" value="BHF-UCL"/>
</dbReference>
<dbReference type="GO" id="GO:0048018">
    <property type="term" value="F:receptor ligand activity"/>
    <property type="evidence" value="ECO:0000318"/>
    <property type="project" value="GO_Central"/>
</dbReference>
<dbReference type="GO" id="GO:0009887">
    <property type="term" value="P:animal organ morphogenesis"/>
    <property type="evidence" value="ECO:0007669"/>
    <property type="project" value="TreeGrafter"/>
</dbReference>
<dbReference type="GO" id="GO:0048263">
    <property type="term" value="P:determination of dorsal identity"/>
    <property type="evidence" value="ECO:0000315"/>
    <property type="project" value="BHF-UCL"/>
</dbReference>
<dbReference type="GO" id="GO:0007399">
    <property type="term" value="P:nervous system development"/>
    <property type="evidence" value="ECO:0000315"/>
    <property type="project" value="BHF-UCL"/>
</dbReference>
<dbReference type="GO" id="GO:0036032">
    <property type="term" value="P:neural crest cell delamination"/>
    <property type="evidence" value="ECO:0000315"/>
    <property type="project" value="Xenbase"/>
</dbReference>
<dbReference type="GO" id="GO:0014032">
    <property type="term" value="P:neural crest cell development"/>
    <property type="evidence" value="ECO:0000270"/>
    <property type="project" value="BHF-UCL"/>
</dbReference>
<dbReference type="GO" id="GO:0014029">
    <property type="term" value="P:neural crest formation"/>
    <property type="evidence" value="ECO:0000270"/>
    <property type="project" value="BHF-UCL"/>
</dbReference>
<dbReference type="GO" id="GO:0039022">
    <property type="term" value="P:pronephric duct development"/>
    <property type="evidence" value="ECO:0000270"/>
    <property type="project" value="BHF-UCL"/>
</dbReference>
<dbReference type="GO" id="GO:0038098">
    <property type="term" value="P:sequestering of BMP from receptor via BMP binding"/>
    <property type="evidence" value="ECO:0000318"/>
    <property type="project" value="GO_Central"/>
</dbReference>
<dbReference type="GO" id="GO:0035582">
    <property type="term" value="P:sequestering of BMP in extracellular matrix"/>
    <property type="evidence" value="ECO:0000314"/>
    <property type="project" value="BHF-UCL"/>
</dbReference>
<dbReference type="GO" id="GO:0032525">
    <property type="term" value="P:somite rostral/caudal axis specification"/>
    <property type="evidence" value="ECO:0000315"/>
    <property type="project" value="BHF-UCL"/>
</dbReference>
<dbReference type="FunFam" id="2.10.90.10:FF:000013">
    <property type="entry name" value="Gremlin"/>
    <property type="match status" value="1"/>
</dbReference>
<dbReference type="Gene3D" id="2.10.90.10">
    <property type="entry name" value="Cystine-knot cytokines"/>
    <property type="match status" value="1"/>
</dbReference>
<dbReference type="InterPro" id="IPR006207">
    <property type="entry name" value="Cys_knot_C"/>
</dbReference>
<dbReference type="InterPro" id="IPR029034">
    <property type="entry name" value="Cystine-knot_cytokine"/>
</dbReference>
<dbReference type="InterPro" id="IPR004133">
    <property type="entry name" value="DAN"/>
</dbReference>
<dbReference type="InterPro" id="IPR017159">
    <property type="entry name" value="Gremlin-1/2"/>
</dbReference>
<dbReference type="PANTHER" id="PTHR15283">
    <property type="entry name" value="GREMLIN 1"/>
    <property type="match status" value="1"/>
</dbReference>
<dbReference type="PANTHER" id="PTHR15283:SF3">
    <property type="entry name" value="GREMLIN-1"/>
    <property type="match status" value="1"/>
</dbReference>
<dbReference type="Pfam" id="PF03045">
    <property type="entry name" value="DAN"/>
    <property type="match status" value="1"/>
</dbReference>
<dbReference type="PIRSF" id="PIRSF037254">
    <property type="entry name" value="Gremlin_precursor"/>
    <property type="match status" value="1"/>
</dbReference>
<dbReference type="SMART" id="SM00041">
    <property type="entry name" value="CT"/>
    <property type="match status" value="1"/>
</dbReference>
<comment type="function">
    <text evidence="4">Cytokine that has an axial patterning activity. Acts like BMP antagonist in embryonic explants. Blocks the BMP2 activity.</text>
</comment>
<comment type="subcellular location">
    <subcellularLocation>
        <location evidence="5">Secreted</location>
    </subcellularLocation>
</comment>
<comment type="developmental stage">
    <text evidence="4">First detected at tailbud stages. At stage 27, appears in the pronephric duct, trunk and tail bud. In stage 30-40 embryos, expression extends rostrally and caudally to include neural crest cells at all axial levels.</text>
</comment>
<comment type="similarity">
    <text evidence="5">Belongs to the DAN family.</text>
</comment>
<keyword id="KW-0202">Cytokine</keyword>
<keyword id="KW-1015">Disulfide bond</keyword>
<keyword id="KW-0325">Glycoprotein</keyword>
<keyword id="KW-1185">Reference proteome</keyword>
<keyword id="KW-0964">Secreted</keyword>
<keyword id="KW-0732">Signal</keyword>
<proteinExistence type="evidence at transcript level"/>
<evidence type="ECO:0000250" key="1">
    <source>
        <dbReference type="UniProtKB" id="O60565"/>
    </source>
</evidence>
<evidence type="ECO:0000255" key="2"/>
<evidence type="ECO:0000256" key="3">
    <source>
        <dbReference type="SAM" id="MobiDB-lite"/>
    </source>
</evidence>
<evidence type="ECO:0000269" key="4">
    <source>
    </source>
</evidence>
<evidence type="ECO:0000305" key="5"/>
<protein>
    <recommendedName>
        <fullName>Gremlin-1</fullName>
    </recommendedName>
    <alternativeName>
        <fullName>Cysteine knot superfamily 1, BMP antagonist 1</fullName>
    </alternativeName>
</protein>
<reference key="1">
    <citation type="journal article" date="1998" name="Mol. Cell">
        <title>The Xenopus dorsalizing factor Gremlin identifies a novel family of secreted proteins that antagonize BMP activities.</title>
        <authorList>
            <person name="Hsu D.R."/>
            <person name="Economides A.N."/>
            <person name="Wang X."/>
            <person name="Eimon P.M."/>
            <person name="Harland R.M."/>
        </authorList>
    </citation>
    <scope>NUCLEOTIDE SEQUENCE [MRNA]</scope>
    <scope>FUNCTION</scope>
    <scope>DEVELOPMENTAL STAGE</scope>
    <source>
        <tissue>Ovary</tissue>
    </source>
</reference>
<feature type="signal peptide" evidence="2">
    <location>
        <begin position="1"/>
        <end position="24"/>
    </location>
</feature>
<feature type="chain" id="PRO_0000006719" description="Gremlin-1">
    <location>
        <begin position="25"/>
        <end position="182"/>
    </location>
</feature>
<feature type="domain" description="CTCK">
    <location>
        <begin position="92"/>
        <end position="182"/>
    </location>
</feature>
<feature type="region of interest" description="Disordered" evidence="3">
    <location>
        <begin position="23"/>
        <end position="65"/>
    </location>
</feature>
<feature type="glycosylation site" description="N-linked (GlcNAc...) asparagine" evidence="2">
    <location>
        <position position="44"/>
    </location>
</feature>
<feature type="disulfide bond" evidence="1">
    <location>
        <begin position="92"/>
        <end position="142"/>
    </location>
</feature>
<feature type="disulfide bond" evidence="1">
    <location>
        <begin position="106"/>
        <end position="156"/>
    </location>
</feature>
<feature type="disulfide bond" evidence="1">
    <location>
        <begin position="116"/>
        <end position="174"/>
    </location>
</feature>
<feature type="disulfide bond" evidence="1">
    <location>
        <begin position="120"/>
        <end position="176"/>
    </location>
</feature>
<gene>
    <name type="primary">grem1</name>
    <name type="synonym">cktsf1b1</name>
</gene>